<name>CDSN_MACMU</name>
<proteinExistence type="inferred from homology"/>
<protein>
    <recommendedName>
        <fullName>Corneodesmosin</fullName>
    </recommendedName>
</protein>
<comment type="function">
    <text evidence="1">Important for the epidermal barrier integrity.</text>
</comment>
<comment type="subcellular location">
    <subcellularLocation>
        <location>Secreted</location>
    </subcellularLocation>
    <text evidence="1">Found in corneodesmosomes, the intercellular structures that are involved in desquamation.</text>
</comment>
<sequence>MGLSRAPWMGRVGGRGMMALLLAGLLLPGTLAKSIGTFSDPCKDPTRITSPNDPCLTGKGGSSGFSSYSGSSGSGSSISSASGSGGGSSGSSVAQGGSAGSFKPGTGYSQVSYSSGSGSSLQGASSSSQLGGSGSQPGSSGSQPGSSGSHSGSSGSNTGSSSSHSSSSSTFQFSSSSSQVGSGSALPTSDNAYRGILNPSQLGQSSSFSQTSGQRVSSNQRPCSSDIPDSPCSGGPIISHSGPYIPSSHSVSGGQRPVVVVVEQHGSGGPGVVQGLPCSNGGLPGKPCPPITSVDKSYGGYEVVGGSSDSYLVPGMTYSKGKIYPVGYFTKDNPVKGSPGVPSFAAGPPISEGKYFSSNPIIPSQSGASSVIAFQPVGTGGVQLCGGGSTGSKGPCSPFSSRVHSSSSISSSSGSPYHPCGSTSQSPCSPPGTGSFSSSSSSQSSGKIILQPCGSKSSSSGHPCMSVSSLTLTGDPDGSPHPDPSAGAKPCGSGSAGKIPCRSIRDILAQVKPLGPQLADPEVFLPQGELLDSP</sequence>
<organism>
    <name type="scientific">Macaca mulatta</name>
    <name type="common">Rhesus macaque</name>
    <dbReference type="NCBI Taxonomy" id="9544"/>
    <lineage>
        <taxon>Eukaryota</taxon>
        <taxon>Metazoa</taxon>
        <taxon>Chordata</taxon>
        <taxon>Craniata</taxon>
        <taxon>Vertebrata</taxon>
        <taxon>Euteleostomi</taxon>
        <taxon>Mammalia</taxon>
        <taxon>Eutheria</taxon>
        <taxon>Euarchontoglires</taxon>
        <taxon>Primates</taxon>
        <taxon>Haplorrhini</taxon>
        <taxon>Catarrhini</taxon>
        <taxon>Cercopithecidae</taxon>
        <taxon>Cercopithecinae</taxon>
        <taxon>Macaca</taxon>
    </lineage>
</organism>
<evidence type="ECO:0000250" key="1"/>
<evidence type="ECO:0000255" key="2"/>
<evidence type="ECO:0000256" key="3">
    <source>
        <dbReference type="SAM" id="MobiDB-lite"/>
    </source>
</evidence>
<accession>Q5TM45</accession>
<feature type="signal peptide" evidence="2">
    <location>
        <begin position="1"/>
        <end position="32"/>
    </location>
</feature>
<feature type="chain" id="PRO_0000020913" description="Corneodesmosin">
    <location>
        <begin position="33"/>
        <end position="534"/>
    </location>
</feature>
<feature type="region of interest" description="Disordered" evidence="3">
    <location>
        <begin position="38"/>
        <end position="252"/>
    </location>
</feature>
<feature type="region of interest" description="Disordered" evidence="3">
    <location>
        <begin position="396"/>
        <end position="497"/>
    </location>
</feature>
<feature type="compositionally biased region" description="Low complexity" evidence="3">
    <location>
        <begin position="64"/>
        <end position="82"/>
    </location>
</feature>
<feature type="compositionally biased region" description="Low complexity" evidence="3">
    <location>
        <begin position="107"/>
        <end position="185"/>
    </location>
</feature>
<feature type="compositionally biased region" description="Low complexity" evidence="3">
    <location>
        <begin position="200"/>
        <end position="236"/>
    </location>
</feature>
<feature type="compositionally biased region" description="Low complexity" evidence="3">
    <location>
        <begin position="397"/>
        <end position="415"/>
    </location>
</feature>
<feature type="compositionally biased region" description="Low complexity" evidence="3">
    <location>
        <begin position="431"/>
        <end position="446"/>
    </location>
</feature>
<feature type="compositionally biased region" description="Polar residues" evidence="3">
    <location>
        <begin position="454"/>
        <end position="472"/>
    </location>
</feature>
<reference key="1">
    <citation type="journal article" date="2004" name="Mol. Biol. Evol.">
        <title>Rhesus macaque class I duplicon structures, organization, and evolution within the alpha block of the major histocompatibility complex.</title>
        <authorList>
            <person name="Kulski J.K."/>
            <person name="Anzai T."/>
            <person name="Shiina T."/>
            <person name="Inoko H."/>
        </authorList>
    </citation>
    <scope>NUCLEOTIDE SEQUENCE [LARGE SCALE GENOMIC DNA]</scope>
</reference>
<gene>
    <name type="primary">CDSN</name>
</gene>
<keyword id="KW-1185">Reference proteome</keyword>
<keyword id="KW-0964">Secreted</keyword>
<keyword id="KW-0732">Signal</keyword>
<dbReference type="EMBL" id="AB128049">
    <property type="protein sequence ID" value="BAD69749.1"/>
    <property type="molecule type" value="Genomic_DNA"/>
</dbReference>
<dbReference type="RefSeq" id="NP_001098639.1">
    <property type="nucleotide sequence ID" value="NM_001105169.1"/>
</dbReference>
<dbReference type="FunCoup" id="Q5TM45">
    <property type="interactions" value="213"/>
</dbReference>
<dbReference type="STRING" id="9544.ENSMMUP00000020575"/>
<dbReference type="PaxDb" id="9544-ENSMMUP00000020575"/>
<dbReference type="GeneID" id="714553"/>
<dbReference type="KEGG" id="mcc:714553"/>
<dbReference type="CTD" id="1041"/>
<dbReference type="eggNOG" id="ENOG502SQ6F">
    <property type="taxonomic scope" value="Eukaryota"/>
</dbReference>
<dbReference type="InParanoid" id="Q5TM45"/>
<dbReference type="OrthoDB" id="9634493at2759"/>
<dbReference type="Proteomes" id="UP000006718">
    <property type="component" value="Unassembled WGS sequence"/>
</dbReference>
<dbReference type="GO" id="GO:0005576">
    <property type="term" value="C:extracellular region"/>
    <property type="evidence" value="ECO:0007669"/>
    <property type="project" value="UniProtKB-SubCell"/>
</dbReference>
<dbReference type="GO" id="GO:0042803">
    <property type="term" value="F:protein homodimerization activity"/>
    <property type="evidence" value="ECO:0000318"/>
    <property type="project" value="GO_Central"/>
</dbReference>
<dbReference type="GO" id="GO:0098609">
    <property type="term" value="P:cell-cell adhesion"/>
    <property type="evidence" value="ECO:0000318"/>
    <property type="project" value="GO_Central"/>
</dbReference>
<dbReference type="GO" id="GO:0043589">
    <property type="term" value="P:skin morphogenesis"/>
    <property type="evidence" value="ECO:0000250"/>
    <property type="project" value="UniProtKB"/>
</dbReference>
<dbReference type="InterPro" id="IPR026087">
    <property type="entry name" value="Corneodesmosin"/>
</dbReference>
<dbReference type="PANTHER" id="PTHR23207">
    <property type="entry name" value="CORNEODESMOSIN"/>
    <property type="match status" value="1"/>
</dbReference>
<dbReference type="PANTHER" id="PTHR23207:SF2">
    <property type="entry name" value="CORNEODESMOSIN"/>
    <property type="match status" value="1"/>
</dbReference>